<reference key="1">
    <citation type="journal article" date="1998" name="Science">
        <title>Genome sequence of the nematode C. elegans: a platform for investigating biology.</title>
        <authorList>
            <consortium name="The C. elegans sequencing consortium"/>
        </authorList>
    </citation>
    <scope>NUCLEOTIDE SEQUENCE [LARGE SCALE GENOMIC DNA]</scope>
    <source>
        <strain>Bristol N2</strain>
    </source>
</reference>
<organism>
    <name type="scientific">Caenorhabditis elegans</name>
    <dbReference type="NCBI Taxonomy" id="6239"/>
    <lineage>
        <taxon>Eukaryota</taxon>
        <taxon>Metazoa</taxon>
        <taxon>Ecdysozoa</taxon>
        <taxon>Nematoda</taxon>
        <taxon>Chromadorea</taxon>
        <taxon>Rhabditida</taxon>
        <taxon>Rhabditina</taxon>
        <taxon>Rhabditomorpha</taxon>
        <taxon>Rhabditoidea</taxon>
        <taxon>Rhabditidae</taxon>
        <taxon>Peloderinae</taxon>
        <taxon>Caenorhabditis</taxon>
    </lineage>
</organism>
<comment type="similarity">
    <text evidence="1">Belongs to the universal ribosomal protein uL1 family.</text>
</comment>
<gene>
    <name evidence="2" type="primary">rpl-10a</name>
    <name evidence="2" type="synonym">rpl-1</name>
    <name evidence="2" type="ORF">Y71F9AL.13</name>
</gene>
<dbReference type="EMBL" id="FO081777">
    <property type="protein sequence ID" value="CCD73507.1"/>
    <property type="molecule type" value="Genomic_DNA"/>
</dbReference>
<dbReference type="RefSeq" id="NP_491061.1">
    <property type="nucleotide sequence ID" value="NM_058660.5"/>
</dbReference>
<dbReference type="SMR" id="Q9N4I4"/>
<dbReference type="BioGRID" id="37332">
    <property type="interactions" value="74"/>
</dbReference>
<dbReference type="DIP" id="DIP-25861N"/>
<dbReference type="FunCoup" id="Q9N4I4">
    <property type="interactions" value="1782"/>
</dbReference>
<dbReference type="IntAct" id="Q9N4I4">
    <property type="interactions" value="2"/>
</dbReference>
<dbReference type="STRING" id="6239.Y71F9AL.13a.2"/>
<dbReference type="PaxDb" id="6239-Y71F9AL.13a.1"/>
<dbReference type="PeptideAtlas" id="Q9N4I4"/>
<dbReference type="EnsemblMetazoa" id="Y71F9AL.13a.1">
    <property type="protein sequence ID" value="Y71F9AL.13a.1"/>
    <property type="gene ID" value="WBGene00004412"/>
</dbReference>
<dbReference type="GeneID" id="171853"/>
<dbReference type="KEGG" id="cel:CELE_Y71F9AL.13"/>
<dbReference type="UCSC" id="Y71F9AL.13a.1">
    <property type="organism name" value="c. elegans"/>
</dbReference>
<dbReference type="AGR" id="WB:WBGene00004412"/>
<dbReference type="CTD" id="171853"/>
<dbReference type="WormBase" id="Y71F9AL.13a">
    <property type="protein sequence ID" value="CE25552"/>
    <property type="gene ID" value="WBGene00004412"/>
    <property type="gene designation" value="rpl-10a"/>
</dbReference>
<dbReference type="eggNOG" id="KOG1570">
    <property type="taxonomic scope" value="Eukaryota"/>
</dbReference>
<dbReference type="GeneTree" id="ENSGT00940000171664"/>
<dbReference type="HOGENOM" id="CLU_062853_3_0_1"/>
<dbReference type="InParanoid" id="Q9N4I4"/>
<dbReference type="OMA" id="GPRNKMP"/>
<dbReference type="OrthoDB" id="2449818at2759"/>
<dbReference type="PhylomeDB" id="Q9N4I4"/>
<dbReference type="Reactome" id="R-CEL-156827">
    <property type="pathway name" value="L13a-mediated translational silencing of Ceruloplasmin expression"/>
</dbReference>
<dbReference type="Reactome" id="R-CEL-1799339">
    <property type="pathway name" value="SRP-dependent cotranslational protein targeting to membrane"/>
</dbReference>
<dbReference type="Reactome" id="R-CEL-72689">
    <property type="pathway name" value="Formation of a pool of free 40S subunits"/>
</dbReference>
<dbReference type="Reactome" id="R-CEL-72706">
    <property type="pathway name" value="GTP hydrolysis and joining of the 60S ribosomal subunit"/>
</dbReference>
<dbReference type="Reactome" id="R-CEL-975956">
    <property type="pathway name" value="Nonsense Mediated Decay (NMD) independent of the Exon Junction Complex (EJC)"/>
</dbReference>
<dbReference type="Reactome" id="R-CEL-975957">
    <property type="pathway name" value="Nonsense Mediated Decay (NMD) enhanced by the Exon Junction Complex (EJC)"/>
</dbReference>
<dbReference type="PRO" id="PR:Q9N4I4"/>
<dbReference type="Proteomes" id="UP000001940">
    <property type="component" value="Chromosome I"/>
</dbReference>
<dbReference type="Bgee" id="WBGene00004412">
    <property type="expression patterns" value="Expressed in germ line (C elegans) and 4 other cell types or tissues"/>
</dbReference>
<dbReference type="ExpressionAtlas" id="Q9N4I4">
    <property type="expression patterns" value="baseline and differential"/>
</dbReference>
<dbReference type="GO" id="GO:0022625">
    <property type="term" value="C:cytosolic large ribosomal subunit"/>
    <property type="evidence" value="ECO:0000318"/>
    <property type="project" value="GO_Central"/>
</dbReference>
<dbReference type="GO" id="GO:0003723">
    <property type="term" value="F:RNA binding"/>
    <property type="evidence" value="ECO:0000318"/>
    <property type="project" value="GO_Central"/>
</dbReference>
<dbReference type="GO" id="GO:0003735">
    <property type="term" value="F:structural constituent of ribosome"/>
    <property type="evidence" value="ECO:0007669"/>
    <property type="project" value="InterPro"/>
</dbReference>
<dbReference type="GO" id="GO:0006412">
    <property type="term" value="P:translation"/>
    <property type="evidence" value="ECO:0007669"/>
    <property type="project" value="InterPro"/>
</dbReference>
<dbReference type="CDD" id="cd00403">
    <property type="entry name" value="Ribosomal_L1"/>
    <property type="match status" value="1"/>
</dbReference>
<dbReference type="FunFam" id="3.30.190.20:FF:000006">
    <property type="entry name" value="Ribosomal protein"/>
    <property type="match status" value="1"/>
</dbReference>
<dbReference type="FunFam" id="3.40.50.790:FF:000002">
    <property type="entry name" value="Ribosomal protein"/>
    <property type="match status" value="1"/>
</dbReference>
<dbReference type="FunFam" id="3.30.190.20:FF:000009">
    <property type="entry name" value="Ribosomal protein L10a"/>
    <property type="match status" value="1"/>
</dbReference>
<dbReference type="Gene3D" id="3.30.190.20">
    <property type="match status" value="1"/>
</dbReference>
<dbReference type="Gene3D" id="3.40.50.790">
    <property type="match status" value="1"/>
</dbReference>
<dbReference type="InterPro" id="IPR050257">
    <property type="entry name" value="eL8/uL1-like"/>
</dbReference>
<dbReference type="InterPro" id="IPR002143">
    <property type="entry name" value="Ribosomal_uL1"/>
</dbReference>
<dbReference type="InterPro" id="IPR023674">
    <property type="entry name" value="Ribosomal_uL1-like"/>
</dbReference>
<dbReference type="InterPro" id="IPR028364">
    <property type="entry name" value="Ribosomal_uL1/biogenesis"/>
</dbReference>
<dbReference type="InterPro" id="IPR016095">
    <property type="entry name" value="Ribosomal_uL1_3-a/b-sand"/>
</dbReference>
<dbReference type="InterPro" id="IPR023673">
    <property type="entry name" value="Ribosomal_uL1_CS"/>
</dbReference>
<dbReference type="PANTHER" id="PTHR23105">
    <property type="entry name" value="RIBOSOMAL PROTEIN L7AE FAMILY MEMBER"/>
    <property type="match status" value="1"/>
</dbReference>
<dbReference type="Pfam" id="PF00687">
    <property type="entry name" value="Ribosomal_L1"/>
    <property type="match status" value="1"/>
</dbReference>
<dbReference type="PIRSF" id="PIRSF002155">
    <property type="entry name" value="Ribosomal_L1"/>
    <property type="match status" value="1"/>
</dbReference>
<dbReference type="SUPFAM" id="SSF56808">
    <property type="entry name" value="Ribosomal protein L1"/>
    <property type="match status" value="1"/>
</dbReference>
<dbReference type="PROSITE" id="PS01199">
    <property type="entry name" value="RIBOSOMAL_L1"/>
    <property type="match status" value="1"/>
</dbReference>
<sequence length="216" mass="24137">MSKVSRESLNEAIAEVLKGSSEKPRKFRETIELQIGLKNYDPQKDKRFSGSIRLKHIPRPNMKVCVFGDQHHLDEAAAGDIPSMSADDLKKLNKQKKLIKKLAKSYDAFIASESLIKQIPRILGPGLNKAGKFPSVVTHGESLQSKSDEIRATVKFQMKKVLCLSVAVGHVGLTQEELVSNISLSINFLVSLLKKNWQNVRSLNIKSTMGKPQRVY</sequence>
<feature type="chain" id="PRO_0000125826" description="Large ribosomal subunit protein uL1">
    <location>
        <begin position="1"/>
        <end position="216"/>
    </location>
</feature>
<evidence type="ECO:0000305" key="1"/>
<evidence type="ECO:0000312" key="2">
    <source>
        <dbReference type="WormBase" id="Y71F9AL.13a"/>
    </source>
</evidence>
<proteinExistence type="inferred from homology"/>
<keyword id="KW-1185">Reference proteome</keyword>
<keyword id="KW-0687">Ribonucleoprotein</keyword>
<keyword id="KW-0689">Ribosomal protein</keyword>
<protein>
    <recommendedName>
        <fullName evidence="1">Large ribosomal subunit protein uL1</fullName>
    </recommendedName>
    <alternativeName>
        <fullName>60S ribosomal protein L10a</fullName>
    </alternativeName>
</protein>
<name>RL10A_CAEEL</name>
<accession>Q9N4I4</accession>